<sequence>MNLATQIRGGLIVSCQAPADSPLAAPEIIAAMAKAAVLRGAVAVRINTPAHIQAVRQAVNVPIIGLWKQTLPAYPVYITPRFADAVAVAAAGADIIALDATARSRPEPLQDLIQRIHNELGKPVMADIDSLENAAAAVAAGADWVGTTLFGYTETTAHTPPPSWSLLSQLVEHLSVPILSEGGIASPTMAAKALGLGAWAVVVGTDITGIDLKVQQYVAALKANTDLS</sequence>
<name>NANE_THEVB</name>
<organism>
    <name type="scientific">Thermosynechococcus vestitus (strain NIES-2133 / IAM M-273 / BP-1)</name>
    <dbReference type="NCBI Taxonomy" id="197221"/>
    <lineage>
        <taxon>Bacteria</taxon>
        <taxon>Bacillati</taxon>
        <taxon>Cyanobacteriota</taxon>
        <taxon>Cyanophyceae</taxon>
        <taxon>Acaryochloridales</taxon>
        <taxon>Thermosynechococcaceae</taxon>
        <taxon>Thermosynechococcus</taxon>
    </lineage>
</organism>
<feature type="chain" id="PRO_0000179814" description="Putative N-acetylmannosamine-6-phosphate 2-epimerase">
    <location>
        <begin position="1"/>
        <end position="228"/>
    </location>
</feature>
<reference key="1">
    <citation type="journal article" date="2002" name="DNA Res.">
        <title>Complete genome structure of the thermophilic cyanobacterium Thermosynechococcus elongatus BP-1.</title>
        <authorList>
            <person name="Nakamura Y."/>
            <person name="Kaneko T."/>
            <person name="Sato S."/>
            <person name="Ikeuchi M."/>
            <person name="Katoh H."/>
            <person name="Sasamoto S."/>
            <person name="Watanabe A."/>
            <person name="Iriguchi M."/>
            <person name="Kawashima K."/>
            <person name="Kimura T."/>
            <person name="Kishida Y."/>
            <person name="Kiyokawa C."/>
            <person name="Kohara M."/>
            <person name="Matsumoto M."/>
            <person name="Matsuno A."/>
            <person name="Nakazaki N."/>
            <person name="Shimpo S."/>
            <person name="Sugimoto M."/>
            <person name="Takeuchi C."/>
            <person name="Yamada M."/>
            <person name="Tabata S."/>
        </authorList>
    </citation>
    <scope>NUCLEOTIDE SEQUENCE [LARGE SCALE GENOMIC DNA]</scope>
    <source>
        <strain>NIES-2133 / IAM M-273 / BP-1</strain>
    </source>
</reference>
<accession>Q8DGQ5</accession>
<protein>
    <recommendedName>
        <fullName evidence="1">Putative N-acetylmannosamine-6-phosphate 2-epimerase</fullName>
        <ecNumber evidence="1">5.1.3.9</ecNumber>
    </recommendedName>
    <alternativeName>
        <fullName evidence="1">ManNAc-6-P epimerase</fullName>
    </alternativeName>
</protein>
<evidence type="ECO:0000255" key="1">
    <source>
        <dbReference type="HAMAP-Rule" id="MF_01235"/>
    </source>
</evidence>
<dbReference type="EC" id="5.1.3.9" evidence="1"/>
<dbReference type="EMBL" id="BA000039">
    <property type="protein sequence ID" value="BAC09812.1"/>
    <property type="molecule type" value="Genomic_DNA"/>
</dbReference>
<dbReference type="RefSeq" id="NP_683050.1">
    <property type="nucleotide sequence ID" value="NC_004113.1"/>
</dbReference>
<dbReference type="RefSeq" id="WP_011058093.1">
    <property type="nucleotide sequence ID" value="NC_004113.1"/>
</dbReference>
<dbReference type="SMR" id="Q8DGQ5"/>
<dbReference type="STRING" id="197221.gene:10748876"/>
<dbReference type="EnsemblBacteria" id="BAC09812">
    <property type="protein sequence ID" value="BAC09812"/>
    <property type="gene ID" value="BAC09812"/>
</dbReference>
<dbReference type="KEGG" id="tel:tlr2260"/>
<dbReference type="PATRIC" id="fig|197221.4.peg.2369"/>
<dbReference type="eggNOG" id="COG3010">
    <property type="taxonomic scope" value="Bacteria"/>
</dbReference>
<dbReference type="UniPathway" id="UPA00629">
    <property type="reaction ID" value="UER00682"/>
</dbReference>
<dbReference type="Proteomes" id="UP000000440">
    <property type="component" value="Chromosome"/>
</dbReference>
<dbReference type="GO" id="GO:0005829">
    <property type="term" value="C:cytosol"/>
    <property type="evidence" value="ECO:0007669"/>
    <property type="project" value="TreeGrafter"/>
</dbReference>
<dbReference type="GO" id="GO:0047465">
    <property type="term" value="F:N-acylglucosamine-6-phosphate 2-epimerase activity"/>
    <property type="evidence" value="ECO:0007669"/>
    <property type="project" value="UniProtKB-EC"/>
</dbReference>
<dbReference type="GO" id="GO:0005975">
    <property type="term" value="P:carbohydrate metabolic process"/>
    <property type="evidence" value="ECO:0007669"/>
    <property type="project" value="UniProtKB-UniRule"/>
</dbReference>
<dbReference type="GO" id="GO:0006053">
    <property type="term" value="P:N-acetylmannosamine catabolic process"/>
    <property type="evidence" value="ECO:0007669"/>
    <property type="project" value="TreeGrafter"/>
</dbReference>
<dbReference type="GO" id="GO:0019262">
    <property type="term" value="P:N-acetylneuraminate catabolic process"/>
    <property type="evidence" value="ECO:0007669"/>
    <property type="project" value="UniProtKB-UniRule"/>
</dbReference>
<dbReference type="CDD" id="cd04729">
    <property type="entry name" value="NanE"/>
    <property type="match status" value="1"/>
</dbReference>
<dbReference type="Gene3D" id="3.20.20.70">
    <property type="entry name" value="Aldolase class I"/>
    <property type="match status" value="1"/>
</dbReference>
<dbReference type="HAMAP" id="MF_01235">
    <property type="entry name" value="ManNAc6P_epimer"/>
    <property type="match status" value="1"/>
</dbReference>
<dbReference type="InterPro" id="IPR013785">
    <property type="entry name" value="Aldolase_TIM"/>
</dbReference>
<dbReference type="InterPro" id="IPR007260">
    <property type="entry name" value="NanE"/>
</dbReference>
<dbReference type="InterPro" id="IPR011060">
    <property type="entry name" value="RibuloseP-bd_barrel"/>
</dbReference>
<dbReference type="NCBIfam" id="NF002231">
    <property type="entry name" value="PRK01130.1"/>
    <property type="match status" value="1"/>
</dbReference>
<dbReference type="PANTHER" id="PTHR36204">
    <property type="entry name" value="N-ACETYLMANNOSAMINE-6-PHOSPHATE 2-EPIMERASE-RELATED"/>
    <property type="match status" value="1"/>
</dbReference>
<dbReference type="PANTHER" id="PTHR36204:SF1">
    <property type="entry name" value="N-ACETYLMANNOSAMINE-6-PHOSPHATE 2-EPIMERASE-RELATED"/>
    <property type="match status" value="1"/>
</dbReference>
<dbReference type="Pfam" id="PF04131">
    <property type="entry name" value="NanE"/>
    <property type="match status" value="1"/>
</dbReference>
<dbReference type="SUPFAM" id="SSF51366">
    <property type="entry name" value="Ribulose-phoshate binding barrel"/>
    <property type="match status" value="1"/>
</dbReference>
<keyword id="KW-0119">Carbohydrate metabolism</keyword>
<keyword id="KW-0413">Isomerase</keyword>
<keyword id="KW-1185">Reference proteome</keyword>
<gene>
    <name evidence="1" type="primary">nanE</name>
    <name type="ordered locus">tlr2260</name>
</gene>
<proteinExistence type="inferred from homology"/>
<comment type="function">
    <text evidence="1">Converts N-acetylmannosamine-6-phosphate (ManNAc-6-P) to N-acetylglucosamine-6-phosphate (GlcNAc-6-P).</text>
</comment>
<comment type="catalytic activity">
    <reaction evidence="1">
        <text>an N-acyl-D-glucosamine 6-phosphate = an N-acyl-D-mannosamine 6-phosphate</text>
        <dbReference type="Rhea" id="RHEA:23932"/>
        <dbReference type="ChEBI" id="CHEBI:57599"/>
        <dbReference type="ChEBI" id="CHEBI:57666"/>
        <dbReference type="EC" id="5.1.3.9"/>
    </reaction>
</comment>
<comment type="pathway">
    <text evidence="1">Amino-sugar metabolism; N-acetylneuraminate degradation; D-fructose 6-phosphate from N-acetylneuraminate: step 3/5.</text>
</comment>
<comment type="similarity">
    <text evidence="1">Belongs to the NanE family.</text>
</comment>